<name>SPEE_PYRCJ</name>
<keyword id="KW-0002">3D-structure</keyword>
<keyword id="KW-0963">Cytoplasm</keyword>
<keyword id="KW-0620">Polyamine biosynthesis</keyword>
<keyword id="KW-0745">Spermidine biosynthesis</keyword>
<keyword id="KW-0808">Transferase</keyword>
<feature type="chain" id="PRO_1000012013" description="Polyamine aminopropyltransferase">
    <location>
        <begin position="1"/>
        <end position="289"/>
    </location>
</feature>
<feature type="domain" description="PABS" evidence="1">
    <location>
        <begin position="5"/>
        <end position="245"/>
    </location>
</feature>
<feature type="active site" description="Proton acceptor" evidence="1">
    <location>
        <position position="164"/>
    </location>
</feature>
<feature type="binding site" evidence="1">
    <location>
        <position position="36"/>
    </location>
    <ligand>
        <name>S-methyl-5'-thioadenosine</name>
        <dbReference type="ChEBI" id="CHEBI:17509"/>
    </ligand>
</feature>
<feature type="binding site" evidence="1">
    <location>
        <position position="67"/>
    </location>
    <ligand>
        <name>spermidine</name>
        <dbReference type="ChEBI" id="CHEBI:57834"/>
    </ligand>
</feature>
<feature type="binding site" evidence="1">
    <location>
        <position position="91"/>
    </location>
    <ligand>
        <name>spermidine</name>
        <dbReference type="ChEBI" id="CHEBI:57834"/>
    </ligand>
</feature>
<feature type="binding site" evidence="1">
    <location>
        <position position="111"/>
    </location>
    <ligand>
        <name>S-methyl-5'-thioadenosine</name>
        <dbReference type="ChEBI" id="CHEBI:17509"/>
    </ligand>
</feature>
<feature type="binding site" evidence="1">
    <location>
        <begin position="143"/>
        <end position="144"/>
    </location>
    <ligand>
        <name>S-methyl-5'-thioadenosine</name>
        <dbReference type="ChEBI" id="CHEBI:17509"/>
    </ligand>
</feature>
<feature type="strand" evidence="2">
    <location>
        <begin position="7"/>
        <end position="32"/>
    </location>
</feature>
<feature type="strand" evidence="2">
    <location>
        <begin position="37"/>
        <end position="43"/>
    </location>
</feature>
<feature type="turn" evidence="2">
    <location>
        <begin position="44"/>
        <end position="46"/>
    </location>
</feature>
<feature type="strand" evidence="2">
    <location>
        <begin position="47"/>
        <end position="52"/>
    </location>
</feature>
<feature type="strand" evidence="2">
    <location>
        <begin position="55"/>
        <end position="59"/>
    </location>
</feature>
<feature type="turn" evidence="2">
    <location>
        <begin position="60"/>
        <end position="62"/>
    </location>
</feature>
<feature type="helix" evidence="2">
    <location>
        <begin position="63"/>
        <end position="77"/>
    </location>
</feature>
<feature type="strand" evidence="2">
    <location>
        <begin position="78"/>
        <end position="80"/>
    </location>
</feature>
<feature type="strand" evidence="2">
    <location>
        <begin position="83"/>
        <end position="88"/>
    </location>
</feature>
<feature type="helix" evidence="2">
    <location>
        <begin position="93"/>
        <end position="99"/>
    </location>
</feature>
<feature type="strand" evidence="2">
    <location>
        <begin position="106"/>
        <end position="112"/>
    </location>
</feature>
<feature type="helix" evidence="2">
    <location>
        <begin position="114"/>
        <end position="123"/>
    </location>
</feature>
<feature type="helix" evidence="2">
    <location>
        <begin position="125"/>
        <end position="128"/>
    </location>
</feature>
<feature type="helix" evidence="2">
    <location>
        <begin position="131"/>
        <end position="133"/>
    </location>
</feature>
<feature type="strand" evidence="2">
    <location>
        <begin position="137"/>
        <end position="142"/>
    </location>
</feature>
<feature type="helix" evidence="2">
    <location>
        <begin position="144"/>
        <end position="154"/>
    </location>
</feature>
<feature type="strand" evidence="2">
    <location>
        <begin position="158"/>
        <end position="164"/>
    </location>
</feature>
<feature type="turn" evidence="2">
    <location>
        <begin position="168"/>
        <end position="170"/>
    </location>
</feature>
<feature type="turn" evidence="2">
    <location>
        <begin position="172"/>
        <end position="174"/>
    </location>
</feature>
<feature type="helix" evidence="2">
    <location>
        <begin position="175"/>
        <end position="178"/>
    </location>
</feature>
<feature type="helix" evidence="2">
    <location>
        <begin position="180"/>
        <end position="188"/>
    </location>
</feature>
<feature type="strand" evidence="2">
    <location>
        <begin position="190"/>
        <end position="199"/>
    </location>
</feature>
<feature type="turn" evidence="2">
    <location>
        <begin position="203"/>
        <end position="205"/>
    </location>
</feature>
<feature type="helix" evidence="2">
    <location>
        <begin position="207"/>
        <end position="218"/>
    </location>
</feature>
<feature type="strand" evidence="2">
    <location>
        <begin position="222"/>
        <end position="230"/>
    </location>
</feature>
<feature type="helix" evidence="2">
    <location>
        <begin position="232"/>
        <end position="234"/>
    </location>
</feature>
<feature type="strand" evidence="2">
    <location>
        <begin position="235"/>
        <end position="246"/>
    </location>
</feature>
<feature type="helix" evidence="2">
    <location>
        <begin position="249"/>
        <end position="251"/>
    </location>
</feature>
<feature type="helix" evidence="2">
    <location>
        <begin position="254"/>
        <end position="263"/>
    </location>
</feature>
<feature type="helix" evidence="2">
    <location>
        <begin position="273"/>
        <end position="281"/>
    </location>
</feature>
<protein>
    <recommendedName>
        <fullName evidence="1">Polyamine aminopropyltransferase</fullName>
    </recommendedName>
    <alternativeName>
        <fullName evidence="1">Putrescine aminopropyltransferase</fullName>
        <shortName evidence="1">PAPT</shortName>
    </alternativeName>
    <alternativeName>
        <fullName evidence="1">Spermidine synthase</fullName>
        <shortName evidence="1">SPDS</shortName>
        <shortName evidence="1">SPDSY</shortName>
        <ecNumber evidence="1">2.5.1.16</ecNumber>
    </alternativeName>
</protein>
<dbReference type="EC" id="2.5.1.16" evidence="1"/>
<dbReference type="EMBL" id="CP000561">
    <property type="protein sequence ID" value="ABO08198.1"/>
    <property type="molecule type" value="Genomic_DNA"/>
</dbReference>
<dbReference type="RefSeq" id="WP_011849456.1">
    <property type="nucleotide sequence ID" value="NC_009073.1"/>
</dbReference>
<dbReference type="PDB" id="7XIF">
    <property type="method" value="X-ray"/>
    <property type="resolution" value="2.14 A"/>
    <property type="chains" value="A/B/C/D/E/F/G/H/I/J/K/L=1-289"/>
</dbReference>
<dbReference type="PDB" id="7XIG">
    <property type="method" value="X-ray"/>
    <property type="resolution" value="2.25 A"/>
    <property type="chains" value="A/B/C/D/E/F/G/H=1-289"/>
</dbReference>
<dbReference type="PDB" id="7XIH">
    <property type="method" value="X-ray"/>
    <property type="resolution" value="1.20 A"/>
    <property type="chains" value="A/B=1-289"/>
</dbReference>
<dbReference type="PDB" id="7XII">
    <property type="method" value="X-ray"/>
    <property type="resolution" value="2.25 A"/>
    <property type="chains" value="A/B/C/D=1-289"/>
</dbReference>
<dbReference type="PDBsum" id="7XIF"/>
<dbReference type="PDBsum" id="7XIG"/>
<dbReference type="PDBsum" id="7XIH"/>
<dbReference type="PDBsum" id="7XII"/>
<dbReference type="SMR" id="A3MU81"/>
<dbReference type="STRING" id="410359.Pcal_0772"/>
<dbReference type="GeneID" id="4909462"/>
<dbReference type="KEGG" id="pcl:Pcal_0772"/>
<dbReference type="eggNOG" id="arCOG00050">
    <property type="taxonomic scope" value="Archaea"/>
</dbReference>
<dbReference type="HOGENOM" id="CLU_048199_0_1_2"/>
<dbReference type="OrthoDB" id="10538at2157"/>
<dbReference type="UniPathway" id="UPA00248">
    <property type="reaction ID" value="UER00314"/>
</dbReference>
<dbReference type="Proteomes" id="UP000001431">
    <property type="component" value="Chromosome"/>
</dbReference>
<dbReference type="GO" id="GO:0005737">
    <property type="term" value="C:cytoplasm"/>
    <property type="evidence" value="ECO:0007669"/>
    <property type="project" value="UniProtKB-SubCell"/>
</dbReference>
<dbReference type="GO" id="GO:0004766">
    <property type="term" value="F:spermidine synthase activity"/>
    <property type="evidence" value="ECO:0007669"/>
    <property type="project" value="UniProtKB-UniRule"/>
</dbReference>
<dbReference type="GO" id="GO:0010487">
    <property type="term" value="F:thermospermine synthase activity"/>
    <property type="evidence" value="ECO:0007669"/>
    <property type="project" value="UniProtKB-ARBA"/>
</dbReference>
<dbReference type="GO" id="GO:0008295">
    <property type="term" value="P:spermidine biosynthetic process"/>
    <property type="evidence" value="ECO:0007669"/>
    <property type="project" value="UniProtKB-UniRule"/>
</dbReference>
<dbReference type="CDD" id="cd02440">
    <property type="entry name" value="AdoMet_MTases"/>
    <property type="match status" value="1"/>
</dbReference>
<dbReference type="FunFam" id="3.40.50.150:FF:000088">
    <property type="entry name" value="Polyamine aminopropyltransferase"/>
    <property type="match status" value="1"/>
</dbReference>
<dbReference type="Gene3D" id="2.30.140.10">
    <property type="entry name" value="Spermidine synthase, tetramerisation domain"/>
    <property type="match status" value="1"/>
</dbReference>
<dbReference type="Gene3D" id="3.40.50.150">
    <property type="entry name" value="Vaccinia Virus protein VP39"/>
    <property type="match status" value="1"/>
</dbReference>
<dbReference type="HAMAP" id="MF_00198">
    <property type="entry name" value="Spermidine_synth"/>
    <property type="match status" value="1"/>
</dbReference>
<dbReference type="InterPro" id="IPR030374">
    <property type="entry name" value="PABS"/>
</dbReference>
<dbReference type="InterPro" id="IPR030373">
    <property type="entry name" value="PABS_CS"/>
</dbReference>
<dbReference type="InterPro" id="IPR029063">
    <property type="entry name" value="SAM-dependent_MTases_sf"/>
</dbReference>
<dbReference type="InterPro" id="IPR001045">
    <property type="entry name" value="Spermi_synthase"/>
</dbReference>
<dbReference type="InterPro" id="IPR035246">
    <property type="entry name" value="Spermidine_synt_N"/>
</dbReference>
<dbReference type="InterPro" id="IPR037163">
    <property type="entry name" value="Spermidine_synt_N_sf"/>
</dbReference>
<dbReference type="NCBIfam" id="NF002010">
    <property type="entry name" value="PRK00811.1"/>
    <property type="match status" value="1"/>
</dbReference>
<dbReference type="PANTHER" id="PTHR43317">
    <property type="entry name" value="THERMOSPERMINE SYNTHASE ACAULIS5"/>
    <property type="match status" value="1"/>
</dbReference>
<dbReference type="PANTHER" id="PTHR43317:SF1">
    <property type="entry name" value="THERMOSPERMINE SYNTHASE ACAULIS5"/>
    <property type="match status" value="1"/>
</dbReference>
<dbReference type="Pfam" id="PF17284">
    <property type="entry name" value="Spermine_synt_N"/>
    <property type="match status" value="1"/>
</dbReference>
<dbReference type="Pfam" id="PF01564">
    <property type="entry name" value="Spermine_synth"/>
    <property type="match status" value="1"/>
</dbReference>
<dbReference type="SUPFAM" id="SSF53335">
    <property type="entry name" value="S-adenosyl-L-methionine-dependent methyltransferases"/>
    <property type="match status" value="1"/>
</dbReference>
<dbReference type="PROSITE" id="PS01330">
    <property type="entry name" value="PABS_1"/>
    <property type="match status" value="1"/>
</dbReference>
<dbReference type="PROSITE" id="PS51006">
    <property type="entry name" value="PABS_2"/>
    <property type="match status" value="1"/>
</dbReference>
<reference key="1">
    <citation type="submission" date="2007-02" db="EMBL/GenBank/DDBJ databases">
        <title>Complete sequence of Pyrobaculum calidifontis JCM 11548.</title>
        <authorList>
            <consortium name="US DOE Joint Genome Institute"/>
            <person name="Copeland A."/>
            <person name="Lucas S."/>
            <person name="Lapidus A."/>
            <person name="Barry K."/>
            <person name="Glavina del Rio T."/>
            <person name="Dalin E."/>
            <person name="Tice H."/>
            <person name="Pitluck S."/>
            <person name="Chain P."/>
            <person name="Malfatti S."/>
            <person name="Shin M."/>
            <person name="Vergez L."/>
            <person name="Schmutz J."/>
            <person name="Larimer F."/>
            <person name="Land M."/>
            <person name="Hauser L."/>
            <person name="Kyrpides N."/>
            <person name="Mikhailova N."/>
            <person name="Cozen A.E."/>
            <person name="Fitz-Gibbon S.T."/>
            <person name="House C.H."/>
            <person name="Saltikov C."/>
            <person name="Lowe T.M."/>
            <person name="Richardson P."/>
        </authorList>
    </citation>
    <scope>NUCLEOTIDE SEQUENCE [LARGE SCALE GENOMIC DNA]</scope>
    <source>
        <strain>DSM 21063 / JCM 11548 / VA1</strain>
    </source>
</reference>
<sequence length="289" mass="32647">MRKVPGPITLIEPLSGNTSLLIKINAIHSVKKSPYQEIIIADTEDYGRVLILDDYIQSSYVDEQYYHESLVHPAMATHPNPRDVLILGGGEGATLREALKHGTVKRAVMVDIDRDVVELSRAYLPQMHQGAFDDPRAKVVIQDGFVYVEEAIKAGDKYDVIIMDLTDPYSSDIAKQLYTREFFAKIRRILNDDGVVVTQAGNSFYFPAEYDMVLEGVKANFPIVAEYEVWIPSFGYAVNFILGSLRYDPHALTPSEVDERLRARGVKTAFYTGRVHLALMNMPIHRKLR</sequence>
<comment type="function">
    <text evidence="1">Catalyzes the irreversible transfer of a propylamine group from the amino donor S-adenosylmethioninamine (decarboxy-AdoMet) to putrescine (1,4-diaminobutane) to yield spermidine.</text>
</comment>
<comment type="catalytic activity">
    <reaction evidence="1">
        <text>S-adenosyl 3-(methylsulfanyl)propylamine + putrescine = S-methyl-5'-thioadenosine + spermidine + H(+)</text>
        <dbReference type="Rhea" id="RHEA:12721"/>
        <dbReference type="ChEBI" id="CHEBI:15378"/>
        <dbReference type="ChEBI" id="CHEBI:17509"/>
        <dbReference type="ChEBI" id="CHEBI:57443"/>
        <dbReference type="ChEBI" id="CHEBI:57834"/>
        <dbReference type="ChEBI" id="CHEBI:326268"/>
        <dbReference type="EC" id="2.5.1.16"/>
    </reaction>
</comment>
<comment type="pathway">
    <text evidence="1">Amine and polyamine biosynthesis; spermidine biosynthesis; spermidine from putrescine: step 1/1.</text>
</comment>
<comment type="subunit">
    <text evidence="1">Homodimer or homotetramer.</text>
</comment>
<comment type="subcellular location">
    <subcellularLocation>
        <location evidence="1">Cytoplasm</location>
    </subcellularLocation>
</comment>
<comment type="similarity">
    <text evidence="1">Belongs to the spermidine/spermine synthase family.</text>
</comment>
<proteinExistence type="evidence at protein level"/>
<evidence type="ECO:0000255" key="1">
    <source>
        <dbReference type="HAMAP-Rule" id="MF_00198"/>
    </source>
</evidence>
<evidence type="ECO:0007829" key="2">
    <source>
        <dbReference type="PDB" id="7XIH"/>
    </source>
</evidence>
<accession>A3MU81</accession>
<organism>
    <name type="scientific">Pyrobaculum calidifontis (strain DSM 21063 / JCM 11548 / VA1)</name>
    <dbReference type="NCBI Taxonomy" id="410359"/>
    <lineage>
        <taxon>Archaea</taxon>
        <taxon>Thermoproteota</taxon>
        <taxon>Thermoprotei</taxon>
        <taxon>Thermoproteales</taxon>
        <taxon>Thermoproteaceae</taxon>
        <taxon>Pyrobaculum</taxon>
    </lineage>
</organism>
<gene>
    <name evidence="1" type="primary">speE</name>
    <name type="ordered locus">Pcal_0772</name>
</gene>